<proteinExistence type="inferred from homology"/>
<accession>A1WXW0</accession>
<reference key="1">
    <citation type="submission" date="2006-12" db="EMBL/GenBank/DDBJ databases">
        <title>Complete sequence of Halorhodospira halophila SL1.</title>
        <authorList>
            <consortium name="US DOE Joint Genome Institute"/>
            <person name="Copeland A."/>
            <person name="Lucas S."/>
            <person name="Lapidus A."/>
            <person name="Barry K."/>
            <person name="Detter J.C."/>
            <person name="Glavina del Rio T."/>
            <person name="Hammon N."/>
            <person name="Israni S."/>
            <person name="Dalin E."/>
            <person name="Tice H."/>
            <person name="Pitluck S."/>
            <person name="Saunders E."/>
            <person name="Brettin T."/>
            <person name="Bruce D."/>
            <person name="Han C."/>
            <person name="Tapia R."/>
            <person name="Schmutz J."/>
            <person name="Larimer F."/>
            <person name="Land M."/>
            <person name="Hauser L."/>
            <person name="Kyrpides N."/>
            <person name="Mikhailova N."/>
            <person name="Hoff W."/>
            <person name="Richardson P."/>
        </authorList>
    </citation>
    <scope>NUCLEOTIDE SEQUENCE [LARGE SCALE GENOMIC DNA]</scope>
    <source>
        <strain>DSM 244 / SL1</strain>
    </source>
</reference>
<comment type="function">
    <text evidence="1">NDH-1 shuttles electrons from NADH, via FMN and iron-sulfur (Fe-S) centers, to quinones in the respiratory chain. The immediate electron acceptor for the enzyme in this species is believed to be ubiquinone. Couples the redox reaction to proton translocation (for every two electrons transferred, four hydrogen ions are translocated across the cytoplasmic membrane), and thus conserves the redox energy in a proton gradient. This subunit may bind ubiquinone.</text>
</comment>
<comment type="catalytic activity">
    <reaction evidence="1">
        <text>a quinone + NADH + 5 H(+)(in) = a quinol + NAD(+) + 4 H(+)(out)</text>
        <dbReference type="Rhea" id="RHEA:57888"/>
        <dbReference type="ChEBI" id="CHEBI:15378"/>
        <dbReference type="ChEBI" id="CHEBI:24646"/>
        <dbReference type="ChEBI" id="CHEBI:57540"/>
        <dbReference type="ChEBI" id="CHEBI:57945"/>
        <dbReference type="ChEBI" id="CHEBI:132124"/>
    </reaction>
</comment>
<comment type="subunit">
    <text evidence="1">NDH-1 is composed of 14 different subunits. Subunits NuoA, H, J, K, L, M, N constitute the membrane sector of the complex.</text>
</comment>
<comment type="subcellular location">
    <subcellularLocation>
        <location evidence="1">Cell inner membrane</location>
        <topology evidence="1">Multi-pass membrane protein</topology>
    </subcellularLocation>
</comment>
<comment type="similarity">
    <text evidence="1">Belongs to the complex I subunit 1 family.</text>
</comment>
<keyword id="KW-0997">Cell inner membrane</keyword>
<keyword id="KW-1003">Cell membrane</keyword>
<keyword id="KW-0472">Membrane</keyword>
<keyword id="KW-0520">NAD</keyword>
<keyword id="KW-0874">Quinone</keyword>
<keyword id="KW-1185">Reference proteome</keyword>
<keyword id="KW-1278">Translocase</keyword>
<keyword id="KW-0812">Transmembrane</keyword>
<keyword id="KW-1133">Transmembrane helix</keyword>
<keyword id="KW-0830">Ubiquinone</keyword>
<organism>
    <name type="scientific">Halorhodospira halophila (strain DSM 244 / SL1)</name>
    <name type="common">Ectothiorhodospira halophila (strain DSM 244 / SL1)</name>
    <dbReference type="NCBI Taxonomy" id="349124"/>
    <lineage>
        <taxon>Bacteria</taxon>
        <taxon>Pseudomonadati</taxon>
        <taxon>Pseudomonadota</taxon>
        <taxon>Gammaproteobacteria</taxon>
        <taxon>Chromatiales</taxon>
        <taxon>Ectothiorhodospiraceae</taxon>
        <taxon>Halorhodospira</taxon>
    </lineage>
</organism>
<evidence type="ECO:0000255" key="1">
    <source>
        <dbReference type="HAMAP-Rule" id="MF_01350"/>
    </source>
</evidence>
<name>NUOH_HALHL</name>
<gene>
    <name evidence="1" type="primary">nuoH</name>
    <name type="ordered locus">Hhal_1758</name>
</gene>
<protein>
    <recommendedName>
        <fullName evidence="1">NADH-quinone oxidoreductase subunit H</fullName>
        <ecNumber evidence="1">7.1.1.-</ecNumber>
    </recommendedName>
    <alternativeName>
        <fullName evidence="1">NADH dehydrogenase I subunit H</fullName>
    </alternativeName>
    <alternativeName>
        <fullName evidence="1">NDH-1 subunit H</fullName>
    </alternativeName>
</protein>
<sequence>MYETLFWQFAKIWAVLIPLFLAVAYFTYVERRVIGHMQDRRGPNRVGPRGLLQPIADALKLLFKEITIPTYASRTLFLIAPAMAIMPALAAWAVIPFDDGLVVADINAGLLYILAMTSLGVYGLIIAGWASNSKYALLGTLRASAQVVSYEIAMGFALVGVLIAAGTMNLSGIVHAQAGPFWEWFWLPLLPLFLIYWISGVAETNRAPFDIAEGESEIVAGFHVEYSGMAFAVFFLAEYANMLLISFLAATLFLGGWHSPFEGLPVLGPAFDWVPGIVWLFAKAAFFAFCYLWFRATFPRYRYDQLMRLGWKVLIPGTVVWLVVLTGLVYGGVGPWF</sequence>
<feature type="chain" id="PRO_0000298817" description="NADH-quinone oxidoreductase subunit H">
    <location>
        <begin position="1"/>
        <end position="337"/>
    </location>
</feature>
<feature type="transmembrane region" description="Helical" evidence="1">
    <location>
        <begin position="9"/>
        <end position="29"/>
    </location>
</feature>
<feature type="transmembrane region" description="Helical" evidence="1">
    <location>
        <begin position="77"/>
        <end position="97"/>
    </location>
</feature>
<feature type="transmembrane region" description="Helical" evidence="1">
    <location>
        <begin position="110"/>
        <end position="130"/>
    </location>
</feature>
<feature type="transmembrane region" description="Helical" evidence="1">
    <location>
        <begin position="154"/>
        <end position="174"/>
    </location>
</feature>
<feature type="transmembrane region" description="Helical" evidence="1">
    <location>
        <begin position="181"/>
        <end position="201"/>
    </location>
</feature>
<feature type="transmembrane region" description="Helical" evidence="1">
    <location>
        <begin position="229"/>
        <end position="249"/>
    </location>
</feature>
<feature type="transmembrane region" description="Helical" evidence="1">
    <location>
        <begin position="274"/>
        <end position="294"/>
    </location>
</feature>
<feature type="transmembrane region" description="Helical" evidence="1">
    <location>
        <begin position="313"/>
        <end position="333"/>
    </location>
</feature>
<dbReference type="EC" id="7.1.1.-" evidence="1"/>
<dbReference type="EMBL" id="CP000544">
    <property type="protein sequence ID" value="ABM62522.1"/>
    <property type="molecule type" value="Genomic_DNA"/>
</dbReference>
<dbReference type="RefSeq" id="WP_011814544.1">
    <property type="nucleotide sequence ID" value="NC_008789.1"/>
</dbReference>
<dbReference type="SMR" id="A1WXW0"/>
<dbReference type="STRING" id="349124.Hhal_1758"/>
<dbReference type="KEGG" id="hha:Hhal_1758"/>
<dbReference type="eggNOG" id="COG1005">
    <property type="taxonomic scope" value="Bacteria"/>
</dbReference>
<dbReference type="HOGENOM" id="CLU_015134_0_1_6"/>
<dbReference type="OrthoDB" id="9803734at2"/>
<dbReference type="Proteomes" id="UP000000647">
    <property type="component" value="Chromosome"/>
</dbReference>
<dbReference type="GO" id="GO:0005886">
    <property type="term" value="C:plasma membrane"/>
    <property type="evidence" value="ECO:0007669"/>
    <property type="project" value="UniProtKB-SubCell"/>
</dbReference>
<dbReference type="GO" id="GO:0003954">
    <property type="term" value="F:NADH dehydrogenase activity"/>
    <property type="evidence" value="ECO:0007669"/>
    <property type="project" value="TreeGrafter"/>
</dbReference>
<dbReference type="GO" id="GO:0016655">
    <property type="term" value="F:oxidoreductase activity, acting on NAD(P)H, quinone or similar compound as acceptor"/>
    <property type="evidence" value="ECO:0007669"/>
    <property type="project" value="UniProtKB-UniRule"/>
</dbReference>
<dbReference type="GO" id="GO:0048038">
    <property type="term" value="F:quinone binding"/>
    <property type="evidence" value="ECO:0007669"/>
    <property type="project" value="UniProtKB-KW"/>
</dbReference>
<dbReference type="GO" id="GO:0009060">
    <property type="term" value="P:aerobic respiration"/>
    <property type="evidence" value="ECO:0007669"/>
    <property type="project" value="TreeGrafter"/>
</dbReference>
<dbReference type="HAMAP" id="MF_01350">
    <property type="entry name" value="NDH1_NuoH"/>
    <property type="match status" value="1"/>
</dbReference>
<dbReference type="InterPro" id="IPR001694">
    <property type="entry name" value="NADH_UbQ_OxRdtase_su1/FPO"/>
</dbReference>
<dbReference type="InterPro" id="IPR018086">
    <property type="entry name" value="NADH_UbQ_OxRdtase_su1_CS"/>
</dbReference>
<dbReference type="NCBIfam" id="NF004741">
    <property type="entry name" value="PRK06076.1-2"/>
    <property type="match status" value="1"/>
</dbReference>
<dbReference type="PANTHER" id="PTHR11432">
    <property type="entry name" value="NADH DEHYDROGENASE SUBUNIT 1"/>
    <property type="match status" value="1"/>
</dbReference>
<dbReference type="PANTHER" id="PTHR11432:SF3">
    <property type="entry name" value="NADH-UBIQUINONE OXIDOREDUCTASE CHAIN 1"/>
    <property type="match status" value="1"/>
</dbReference>
<dbReference type="Pfam" id="PF00146">
    <property type="entry name" value="NADHdh"/>
    <property type="match status" value="1"/>
</dbReference>
<dbReference type="PROSITE" id="PS00667">
    <property type="entry name" value="COMPLEX1_ND1_1"/>
    <property type="match status" value="1"/>
</dbReference>
<dbReference type="PROSITE" id="PS00668">
    <property type="entry name" value="COMPLEX1_ND1_2"/>
    <property type="match status" value="1"/>
</dbReference>